<proteinExistence type="evidence at transcript level"/>
<dbReference type="EC" id="1.11.1.9"/>
<dbReference type="EMBL" id="BC148128">
    <property type="protein sequence ID" value="AAI48129.1"/>
    <property type="molecule type" value="mRNA"/>
</dbReference>
<dbReference type="RefSeq" id="NP_001094583.1">
    <property type="nucleotide sequence ID" value="NM_001101113.2"/>
</dbReference>
<dbReference type="SMR" id="A6QLY2"/>
<dbReference type="FunCoup" id="A6QLY2">
    <property type="interactions" value="236"/>
</dbReference>
<dbReference type="STRING" id="9913.ENSBTAP00000024329"/>
<dbReference type="PaxDb" id="9913-ENSBTAP00000024329"/>
<dbReference type="GeneID" id="523311"/>
<dbReference type="KEGG" id="bta:523311"/>
<dbReference type="CTD" id="2882"/>
<dbReference type="VEuPathDB" id="HostDB:ENSBTAG00000018281"/>
<dbReference type="eggNOG" id="KOG1651">
    <property type="taxonomic scope" value="Eukaryota"/>
</dbReference>
<dbReference type="HOGENOM" id="CLU_029507_0_1_1"/>
<dbReference type="InParanoid" id="A6QLY2"/>
<dbReference type="OMA" id="QCGLTKQ"/>
<dbReference type="OrthoDB" id="446890at2759"/>
<dbReference type="TreeFam" id="TF331942"/>
<dbReference type="Reactome" id="R-BTA-3299685">
    <property type="pathway name" value="Detoxification of Reactive Oxygen Species"/>
</dbReference>
<dbReference type="Proteomes" id="UP000009136">
    <property type="component" value="Chromosome 3"/>
</dbReference>
<dbReference type="Bgee" id="ENSBTAG00000018281">
    <property type="expression patterns" value="Expressed in theca cell and 106 other cell types or tissues"/>
</dbReference>
<dbReference type="GO" id="GO:0005783">
    <property type="term" value="C:endoplasmic reticulum"/>
    <property type="evidence" value="ECO:0000250"/>
    <property type="project" value="UniProtKB"/>
</dbReference>
<dbReference type="GO" id="GO:0005576">
    <property type="term" value="C:extracellular region"/>
    <property type="evidence" value="ECO:0007669"/>
    <property type="project" value="UniProtKB-SubCell"/>
</dbReference>
<dbReference type="GO" id="GO:0004602">
    <property type="term" value="F:glutathione peroxidase activity"/>
    <property type="evidence" value="ECO:0007669"/>
    <property type="project" value="UniProtKB-EC"/>
</dbReference>
<dbReference type="GO" id="GO:0004601">
    <property type="term" value="F:peroxidase activity"/>
    <property type="evidence" value="ECO:0000318"/>
    <property type="project" value="GO_Central"/>
</dbReference>
<dbReference type="GO" id="GO:0006979">
    <property type="term" value="P:response to oxidative stress"/>
    <property type="evidence" value="ECO:0007669"/>
    <property type="project" value="InterPro"/>
</dbReference>
<dbReference type="CDD" id="cd00340">
    <property type="entry name" value="GSH_Peroxidase"/>
    <property type="match status" value="1"/>
</dbReference>
<dbReference type="FunFam" id="3.40.30.10:FF:000049">
    <property type="entry name" value="Glutathione peroxidase"/>
    <property type="match status" value="1"/>
</dbReference>
<dbReference type="Gene3D" id="3.40.30.10">
    <property type="entry name" value="Glutaredoxin"/>
    <property type="match status" value="1"/>
</dbReference>
<dbReference type="InterPro" id="IPR013376">
    <property type="entry name" value="Glut_perox_Gpx7"/>
</dbReference>
<dbReference type="InterPro" id="IPR000889">
    <property type="entry name" value="Glutathione_peroxidase"/>
</dbReference>
<dbReference type="InterPro" id="IPR029759">
    <property type="entry name" value="GPX_AS"/>
</dbReference>
<dbReference type="InterPro" id="IPR029760">
    <property type="entry name" value="GPX_CS"/>
</dbReference>
<dbReference type="InterPro" id="IPR036249">
    <property type="entry name" value="Thioredoxin-like_sf"/>
</dbReference>
<dbReference type="NCBIfam" id="TIGR02540">
    <property type="entry name" value="gpx7"/>
    <property type="match status" value="1"/>
</dbReference>
<dbReference type="PANTHER" id="PTHR11592">
    <property type="entry name" value="GLUTATHIONE PEROXIDASE"/>
    <property type="match status" value="1"/>
</dbReference>
<dbReference type="PANTHER" id="PTHR11592:SF5">
    <property type="entry name" value="GLUTATHIONE PEROXIDASE 7"/>
    <property type="match status" value="1"/>
</dbReference>
<dbReference type="Pfam" id="PF00255">
    <property type="entry name" value="GSHPx"/>
    <property type="match status" value="1"/>
</dbReference>
<dbReference type="PIRSF" id="PIRSF000303">
    <property type="entry name" value="Glutathion_perox"/>
    <property type="match status" value="1"/>
</dbReference>
<dbReference type="PRINTS" id="PR01011">
    <property type="entry name" value="GLUTPROXDASE"/>
</dbReference>
<dbReference type="SUPFAM" id="SSF52833">
    <property type="entry name" value="Thioredoxin-like"/>
    <property type="match status" value="1"/>
</dbReference>
<dbReference type="PROSITE" id="PS00460">
    <property type="entry name" value="GLUTATHIONE_PEROXID_1"/>
    <property type="match status" value="1"/>
</dbReference>
<dbReference type="PROSITE" id="PS00763">
    <property type="entry name" value="GLUTATHIONE_PEROXID_2"/>
    <property type="match status" value="1"/>
</dbReference>
<dbReference type="PROSITE" id="PS51355">
    <property type="entry name" value="GLUTATHIONE_PEROXID_3"/>
    <property type="match status" value="1"/>
</dbReference>
<name>GPX7_BOVIN</name>
<keyword id="KW-0560">Oxidoreductase</keyword>
<keyword id="KW-0575">Peroxidase</keyword>
<keyword id="KW-1185">Reference proteome</keyword>
<keyword id="KW-0964">Secreted</keyword>
<keyword id="KW-0732">Signal</keyword>
<accession>A6QLY2</accession>
<evidence type="ECO:0000250" key="1"/>
<evidence type="ECO:0000255" key="2"/>
<evidence type="ECO:0000305" key="3"/>
<gene>
    <name type="primary">GPX7</name>
</gene>
<comment type="catalytic activity">
    <reaction>
        <text>2 glutathione + H2O2 = glutathione disulfide + 2 H2O</text>
        <dbReference type="Rhea" id="RHEA:16833"/>
        <dbReference type="ChEBI" id="CHEBI:15377"/>
        <dbReference type="ChEBI" id="CHEBI:16240"/>
        <dbReference type="ChEBI" id="CHEBI:57925"/>
        <dbReference type="ChEBI" id="CHEBI:58297"/>
        <dbReference type="EC" id="1.11.1.9"/>
    </reaction>
</comment>
<comment type="subcellular location">
    <subcellularLocation>
        <location evidence="3">Secreted</location>
    </subcellularLocation>
</comment>
<comment type="similarity">
    <text evidence="3">Belongs to the glutathione peroxidase family.</text>
</comment>
<sequence length="186" mass="20908">MVAARAAAWLLLAAAACAPREQDFYDFKAVNIRGKLVSLEKYRGSVSLVVNVASECGFTDQHYRALQQLQRDLGPHHFNVLAFPCNQFGQQEPDSNKEIESFARRTYSVSFPMFSKIAVTGTGAHPAFKYLTETSGKEPTWNFWKYLVAPDGKVIGAWDPTVSVEEIRPQITALVRKLILKKREDL</sequence>
<feature type="signal peptide" evidence="2">
    <location>
        <begin position="1"/>
        <end position="18"/>
    </location>
</feature>
<feature type="chain" id="PRO_0000317754" description="Glutathione peroxidase 7">
    <location>
        <begin position="19"/>
        <end position="186"/>
    </location>
</feature>
<feature type="active site" evidence="1">
    <location>
        <position position="56"/>
    </location>
</feature>
<protein>
    <recommendedName>
        <fullName>Glutathione peroxidase 7</fullName>
        <shortName>GPx-7</shortName>
        <shortName>GSHPx-7</shortName>
        <ecNumber>1.11.1.9</ecNumber>
    </recommendedName>
</protein>
<organism>
    <name type="scientific">Bos taurus</name>
    <name type="common">Bovine</name>
    <dbReference type="NCBI Taxonomy" id="9913"/>
    <lineage>
        <taxon>Eukaryota</taxon>
        <taxon>Metazoa</taxon>
        <taxon>Chordata</taxon>
        <taxon>Craniata</taxon>
        <taxon>Vertebrata</taxon>
        <taxon>Euteleostomi</taxon>
        <taxon>Mammalia</taxon>
        <taxon>Eutheria</taxon>
        <taxon>Laurasiatheria</taxon>
        <taxon>Artiodactyla</taxon>
        <taxon>Ruminantia</taxon>
        <taxon>Pecora</taxon>
        <taxon>Bovidae</taxon>
        <taxon>Bovinae</taxon>
        <taxon>Bos</taxon>
    </lineage>
</organism>
<reference key="1">
    <citation type="submission" date="2007-06" db="EMBL/GenBank/DDBJ databases">
        <authorList>
            <consortium name="NIH - Mammalian Gene Collection (MGC) project"/>
        </authorList>
    </citation>
    <scope>NUCLEOTIDE SEQUENCE [LARGE SCALE MRNA]</scope>
    <source>
        <strain>Hereford</strain>
        <tissue>Fetal cerebellum</tissue>
    </source>
</reference>